<proteinExistence type="inferred from homology"/>
<comment type="function">
    <text evidence="1">This protein is involved in the attenuation mechanism for the control of the expression of the his operon structural genes.</text>
</comment>
<comment type="similarity">
    <text evidence="2">Belongs to the HisL family.</text>
</comment>
<protein>
    <recommendedName>
        <fullName>his operon leader peptide</fullName>
    </recommendedName>
    <alternativeName>
        <fullName>his operon attenuator peptide</fullName>
    </alternativeName>
</protein>
<keyword id="KW-0028">Amino-acid biosynthesis</keyword>
<keyword id="KW-0368">Histidine biosynthesis</keyword>
<keyword id="KW-0428">Leader peptide</keyword>
<keyword id="KW-1185">Reference proteome</keyword>
<sequence>MTRVQFKHHHHHHHPD</sequence>
<feature type="peptide" id="PRO_0000043988" description="his operon leader peptide">
    <location>
        <begin position="1"/>
        <end position="16"/>
    </location>
</feature>
<gene>
    <name type="primary">hisL</name>
    <name type="ordered locus">c5496</name>
</gene>
<evidence type="ECO:0000250" key="1"/>
<evidence type="ECO:0000305" key="2"/>
<organism>
    <name type="scientific">Escherichia coli O6:H1 (strain CFT073 / ATCC 700928 / UPEC)</name>
    <dbReference type="NCBI Taxonomy" id="199310"/>
    <lineage>
        <taxon>Bacteria</taxon>
        <taxon>Pseudomonadati</taxon>
        <taxon>Pseudomonadota</taxon>
        <taxon>Gammaproteobacteria</taxon>
        <taxon>Enterobacterales</taxon>
        <taxon>Enterobacteriaceae</taxon>
        <taxon>Escherichia</taxon>
    </lineage>
</organism>
<reference key="1">
    <citation type="journal article" date="2002" name="Proc. Natl. Acad. Sci. U.S.A.">
        <title>Extensive mosaic structure revealed by the complete genome sequence of uropathogenic Escherichia coli.</title>
        <authorList>
            <person name="Welch R.A."/>
            <person name="Burland V."/>
            <person name="Plunkett G. III"/>
            <person name="Redford P."/>
            <person name="Roesch P."/>
            <person name="Rasko D."/>
            <person name="Buckles E.L."/>
            <person name="Liou S.-R."/>
            <person name="Boutin A."/>
            <person name="Hackett J."/>
            <person name="Stroud D."/>
            <person name="Mayhew G.F."/>
            <person name="Rose D.J."/>
            <person name="Zhou S."/>
            <person name="Schwartz D.C."/>
            <person name="Perna N.T."/>
            <person name="Mobley H.L.T."/>
            <person name="Donnenberg M.S."/>
            <person name="Blattner F.R."/>
        </authorList>
    </citation>
    <scope>NUCLEOTIDE SEQUENCE [LARGE SCALE GENOMIC DNA]</scope>
    <source>
        <strain>CFT073 / ATCC 700928 / UPEC</strain>
    </source>
</reference>
<name>LPHI_ECOL6</name>
<accession>P60996</accession>
<accession>P03058</accession>
<dbReference type="EMBL" id="AE014075">
    <property type="protein sequence ID" value="AAN81000.1"/>
    <property type="molecule type" value="Genomic_DNA"/>
</dbReference>
<dbReference type="RefSeq" id="WP_001364200.1">
    <property type="nucleotide sequence ID" value="NZ_CP051263.1"/>
</dbReference>
<dbReference type="GeneID" id="97446168"/>
<dbReference type="KEGG" id="ecc:c5496"/>
<dbReference type="HOGENOM" id="CLU_222361_0_0_6"/>
<dbReference type="BioCyc" id="ECOL199310:C5496-MONOMER"/>
<dbReference type="Proteomes" id="UP000001410">
    <property type="component" value="Chromosome"/>
</dbReference>
<dbReference type="GO" id="GO:0000105">
    <property type="term" value="P:L-histidine biosynthetic process"/>
    <property type="evidence" value="ECO:0007669"/>
    <property type="project" value="UniProtKB-KW"/>
</dbReference>
<dbReference type="InterPro" id="IPR012565">
    <property type="entry name" value="His_leader"/>
</dbReference>
<dbReference type="Pfam" id="PF08047">
    <property type="entry name" value="His_leader"/>
    <property type="match status" value="1"/>
</dbReference>